<evidence type="ECO:0000255" key="1">
    <source>
        <dbReference type="HAMAP-Rule" id="MF_00332"/>
    </source>
</evidence>
<evidence type="ECO:0000256" key="2">
    <source>
        <dbReference type="SAM" id="MobiDB-lite"/>
    </source>
</evidence>
<accession>C3K275</accession>
<keyword id="KW-0067">ATP-binding</keyword>
<keyword id="KW-0143">Chaperone</keyword>
<keyword id="KW-0547">Nucleotide-binding</keyword>
<keyword id="KW-0597">Phosphoprotein</keyword>
<keyword id="KW-0346">Stress response</keyword>
<name>DNAK_PSEFS</name>
<sequence length="638" mass="68200">MGKIIGIDLGTTNSCVSVMENGKAKVIENAEGARTTPSIIAYANDGEILVGQSAKRQAVTNPHNTLYAVKRLIGRKFDEEVVQKDIKMVPYKIAKADNGDAWVEVNGNKMSAPQISAEVLKKMKKTAEDYLGETVTEAVITVPAYFNDSQRQATKDAGRIAGLDVKRIINEPTAAALAYGMDKAKGDHTVIVYDLGGGTFDVSVIEIAEVDGEHQFEVLATNGDTFLGGEDFDIRLIDYLVDEFKKESGMNLKGDPLAMQRLKEAAEKAKIELSSSMSTDVNLPYITADATGPKHLNVKISRAKLEALVEDLVQRTIEPCRIALKDAGIDVGSINDVILVGGQTRMPLVQQKVTEFFGKEARKDVNPDEAVAMGAAIQGAVLAGDVKDVLLLDVSPLTLGIETMGGVMTALIEKNTTIPTKKSQVFSTADDNQGAVTIHVLQGERKQAAQNKSLGKFDLAEIPPAPRGVPQIEVTFDIDANGILHVGAKDKATGKEQKITIKANSGLSDEEIQQMIRDAEANADADAKFAELAGARNQGDALVHSTRKMVADAGDKVTAEEKAAIEAAVVALEAAVKGDDKAAIEAKIEELSKVSAPVAQKMYAEQGQPADGAAQQAEPEAKHDDVVDAEFEEVKDQK</sequence>
<reference key="1">
    <citation type="journal article" date="2009" name="Genome Biol.">
        <title>Genomic and genetic analyses of diversity and plant interactions of Pseudomonas fluorescens.</title>
        <authorList>
            <person name="Silby M.W."/>
            <person name="Cerdeno-Tarraga A.M."/>
            <person name="Vernikos G.S."/>
            <person name="Giddens S.R."/>
            <person name="Jackson R.W."/>
            <person name="Preston G.M."/>
            <person name="Zhang X.-X."/>
            <person name="Moon C.D."/>
            <person name="Gehrig S.M."/>
            <person name="Godfrey S.A.C."/>
            <person name="Knight C.G."/>
            <person name="Malone J.G."/>
            <person name="Robinson Z."/>
            <person name="Spiers A.J."/>
            <person name="Harris S."/>
            <person name="Challis G.L."/>
            <person name="Yaxley A.M."/>
            <person name="Harris D."/>
            <person name="Seeger K."/>
            <person name="Murphy L."/>
            <person name="Rutter S."/>
            <person name="Squares R."/>
            <person name="Quail M.A."/>
            <person name="Saunders E."/>
            <person name="Mavromatis K."/>
            <person name="Brettin T.S."/>
            <person name="Bentley S.D."/>
            <person name="Hothersall J."/>
            <person name="Stephens E."/>
            <person name="Thomas C.M."/>
            <person name="Parkhill J."/>
            <person name="Levy S.B."/>
            <person name="Rainey P.B."/>
            <person name="Thomson N.R."/>
        </authorList>
    </citation>
    <scope>NUCLEOTIDE SEQUENCE [LARGE SCALE GENOMIC DNA]</scope>
    <source>
        <strain>SBW25</strain>
    </source>
</reference>
<gene>
    <name evidence="1" type="primary">dnaK</name>
    <name type="ordered locus">PFLU_5269</name>
</gene>
<feature type="chain" id="PRO_1000205194" description="Chaperone protein DnaK">
    <location>
        <begin position="1"/>
        <end position="638"/>
    </location>
</feature>
<feature type="region of interest" description="Disordered" evidence="2">
    <location>
        <begin position="602"/>
        <end position="638"/>
    </location>
</feature>
<feature type="compositionally biased region" description="Low complexity" evidence="2">
    <location>
        <begin position="604"/>
        <end position="618"/>
    </location>
</feature>
<feature type="compositionally biased region" description="Basic and acidic residues" evidence="2">
    <location>
        <begin position="619"/>
        <end position="638"/>
    </location>
</feature>
<feature type="modified residue" description="Phosphothreonine; by autocatalysis" evidence="1">
    <location>
        <position position="199"/>
    </location>
</feature>
<comment type="function">
    <text evidence="1">Acts as a chaperone.</text>
</comment>
<comment type="induction">
    <text evidence="1">By stress conditions e.g. heat shock.</text>
</comment>
<comment type="similarity">
    <text evidence="1">Belongs to the heat shock protein 70 family.</text>
</comment>
<organism>
    <name type="scientific">Pseudomonas fluorescens (strain SBW25)</name>
    <dbReference type="NCBI Taxonomy" id="216595"/>
    <lineage>
        <taxon>Bacteria</taxon>
        <taxon>Pseudomonadati</taxon>
        <taxon>Pseudomonadota</taxon>
        <taxon>Gammaproteobacteria</taxon>
        <taxon>Pseudomonadales</taxon>
        <taxon>Pseudomonadaceae</taxon>
        <taxon>Pseudomonas</taxon>
    </lineage>
</organism>
<proteinExistence type="inferred from homology"/>
<dbReference type="EMBL" id="AM181176">
    <property type="protein sequence ID" value="CAY52373.1"/>
    <property type="molecule type" value="Genomic_DNA"/>
</dbReference>
<dbReference type="RefSeq" id="WP_015885931.1">
    <property type="nucleotide sequence ID" value="NC_012660.1"/>
</dbReference>
<dbReference type="SMR" id="C3K275"/>
<dbReference type="STRING" id="294.SRM1_00809"/>
<dbReference type="GeneID" id="93466900"/>
<dbReference type="eggNOG" id="COG0443">
    <property type="taxonomic scope" value="Bacteria"/>
</dbReference>
<dbReference type="HOGENOM" id="CLU_005965_2_1_6"/>
<dbReference type="OrthoDB" id="9766019at2"/>
<dbReference type="GO" id="GO:0005524">
    <property type="term" value="F:ATP binding"/>
    <property type="evidence" value="ECO:0007669"/>
    <property type="project" value="UniProtKB-UniRule"/>
</dbReference>
<dbReference type="GO" id="GO:0140662">
    <property type="term" value="F:ATP-dependent protein folding chaperone"/>
    <property type="evidence" value="ECO:0007669"/>
    <property type="project" value="InterPro"/>
</dbReference>
<dbReference type="GO" id="GO:0051082">
    <property type="term" value="F:unfolded protein binding"/>
    <property type="evidence" value="ECO:0007669"/>
    <property type="project" value="InterPro"/>
</dbReference>
<dbReference type="CDD" id="cd10234">
    <property type="entry name" value="ASKHA_NBD_HSP70_DnaK-like"/>
    <property type="match status" value="1"/>
</dbReference>
<dbReference type="FunFam" id="2.60.34.10:FF:000014">
    <property type="entry name" value="Chaperone protein DnaK HSP70"/>
    <property type="match status" value="1"/>
</dbReference>
<dbReference type="FunFam" id="1.20.1270.10:FF:000001">
    <property type="entry name" value="Molecular chaperone DnaK"/>
    <property type="match status" value="1"/>
</dbReference>
<dbReference type="FunFam" id="3.30.420.40:FF:000004">
    <property type="entry name" value="Molecular chaperone DnaK"/>
    <property type="match status" value="1"/>
</dbReference>
<dbReference type="FunFam" id="3.90.640.10:FF:000003">
    <property type="entry name" value="Molecular chaperone DnaK"/>
    <property type="match status" value="1"/>
</dbReference>
<dbReference type="Gene3D" id="1.20.1270.10">
    <property type="match status" value="1"/>
</dbReference>
<dbReference type="Gene3D" id="3.30.420.40">
    <property type="match status" value="2"/>
</dbReference>
<dbReference type="Gene3D" id="3.90.640.10">
    <property type="entry name" value="Actin, Chain A, domain 4"/>
    <property type="match status" value="1"/>
</dbReference>
<dbReference type="Gene3D" id="2.60.34.10">
    <property type="entry name" value="Substrate Binding Domain Of DNAk, Chain A, domain 1"/>
    <property type="match status" value="1"/>
</dbReference>
<dbReference type="HAMAP" id="MF_00332">
    <property type="entry name" value="DnaK"/>
    <property type="match status" value="1"/>
</dbReference>
<dbReference type="InterPro" id="IPR043129">
    <property type="entry name" value="ATPase_NBD"/>
</dbReference>
<dbReference type="InterPro" id="IPR012725">
    <property type="entry name" value="Chaperone_DnaK"/>
</dbReference>
<dbReference type="InterPro" id="IPR018181">
    <property type="entry name" value="Heat_shock_70_CS"/>
</dbReference>
<dbReference type="InterPro" id="IPR029048">
    <property type="entry name" value="HSP70_C_sf"/>
</dbReference>
<dbReference type="InterPro" id="IPR029047">
    <property type="entry name" value="HSP70_peptide-bd_sf"/>
</dbReference>
<dbReference type="InterPro" id="IPR013126">
    <property type="entry name" value="Hsp_70_fam"/>
</dbReference>
<dbReference type="NCBIfam" id="NF001413">
    <property type="entry name" value="PRK00290.1"/>
    <property type="match status" value="1"/>
</dbReference>
<dbReference type="NCBIfam" id="NF003520">
    <property type="entry name" value="PRK05183.1"/>
    <property type="match status" value="1"/>
</dbReference>
<dbReference type="NCBIfam" id="TIGR02350">
    <property type="entry name" value="prok_dnaK"/>
    <property type="match status" value="1"/>
</dbReference>
<dbReference type="PANTHER" id="PTHR19375">
    <property type="entry name" value="HEAT SHOCK PROTEIN 70KDA"/>
    <property type="match status" value="1"/>
</dbReference>
<dbReference type="Pfam" id="PF00012">
    <property type="entry name" value="HSP70"/>
    <property type="match status" value="1"/>
</dbReference>
<dbReference type="PRINTS" id="PR00301">
    <property type="entry name" value="HEATSHOCK70"/>
</dbReference>
<dbReference type="SUPFAM" id="SSF53067">
    <property type="entry name" value="Actin-like ATPase domain"/>
    <property type="match status" value="2"/>
</dbReference>
<dbReference type="SUPFAM" id="SSF100934">
    <property type="entry name" value="Heat shock protein 70kD (HSP70), C-terminal subdomain"/>
    <property type="match status" value="1"/>
</dbReference>
<dbReference type="SUPFAM" id="SSF100920">
    <property type="entry name" value="Heat shock protein 70kD (HSP70), peptide-binding domain"/>
    <property type="match status" value="1"/>
</dbReference>
<dbReference type="PROSITE" id="PS00297">
    <property type="entry name" value="HSP70_1"/>
    <property type="match status" value="1"/>
</dbReference>
<dbReference type="PROSITE" id="PS00329">
    <property type="entry name" value="HSP70_2"/>
    <property type="match status" value="1"/>
</dbReference>
<dbReference type="PROSITE" id="PS01036">
    <property type="entry name" value="HSP70_3"/>
    <property type="match status" value="1"/>
</dbReference>
<protein>
    <recommendedName>
        <fullName evidence="1">Chaperone protein DnaK</fullName>
    </recommendedName>
    <alternativeName>
        <fullName evidence="1">HSP70</fullName>
    </alternativeName>
    <alternativeName>
        <fullName evidence="1">Heat shock 70 kDa protein</fullName>
    </alternativeName>
    <alternativeName>
        <fullName evidence="1">Heat shock protein 70</fullName>
    </alternativeName>
</protein>